<sequence length="118" mass="13211">MARIAGINIPDHKHTVIALTAIFGIGKTRSKAICAETGIAENVKISELSEEQIDILREAVGKFVVEGDLRREITLSIKRLMDLGCYRGLRHRRGLPVRGQRTKTNARTRKGPRKPIKK</sequence>
<keyword id="KW-0687">Ribonucleoprotein</keyword>
<keyword id="KW-0689">Ribosomal protein</keyword>
<keyword id="KW-0694">RNA-binding</keyword>
<keyword id="KW-0699">rRNA-binding</keyword>
<keyword id="KW-0820">tRNA-binding</keyword>
<organism>
    <name type="scientific">Klebsiella pneumoniae subsp. pneumoniae (strain ATCC 700721 / MGH 78578)</name>
    <dbReference type="NCBI Taxonomy" id="272620"/>
    <lineage>
        <taxon>Bacteria</taxon>
        <taxon>Pseudomonadati</taxon>
        <taxon>Pseudomonadota</taxon>
        <taxon>Gammaproteobacteria</taxon>
        <taxon>Enterobacterales</taxon>
        <taxon>Enterobacteriaceae</taxon>
        <taxon>Klebsiella/Raoultella group</taxon>
        <taxon>Klebsiella</taxon>
        <taxon>Klebsiella pneumoniae complex</taxon>
    </lineage>
</organism>
<proteinExistence type="inferred from homology"/>
<accession>A6TEV1</accession>
<evidence type="ECO:0000255" key="1">
    <source>
        <dbReference type="HAMAP-Rule" id="MF_01315"/>
    </source>
</evidence>
<evidence type="ECO:0000256" key="2">
    <source>
        <dbReference type="SAM" id="MobiDB-lite"/>
    </source>
</evidence>
<evidence type="ECO:0000305" key="3"/>
<feature type="chain" id="PRO_1000051881" description="Small ribosomal subunit protein uS13">
    <location>
        <begin position="1"/>
        <end position="118"/>
    </location>
</feature>
<feature type="region of interest" description="Disordered" evidence="2">
    <location>
        <begin position="94"/>
        <end position="118"/>
    </location>
</feature>
<reference key="1">
    <citation type="submission" date="2006-09" db="EMBL/GenBank/DDBJ databases">
        <authorList>
            <consortium name="The Klebsiella pneumonia Genome Sequencing Project"/>
            <person name="McClelland M."/>
            <person name="Sanderson E.K."/>
            <person name="Spieth J."/>
            <person name="Clifton W.S."/>
            <person name="Latreille P."/>
            <person name="Sabo A."/>
            <person name="Pepin K."/>
            <person name="Bhonagiri V."/>
            <person name="Porwollik S."/>
            <person name="Ali J."/>
            <person name="Wilson R.K."/>
        </authorList>
    </citation>
    <scope>NUCLEOTIDE SEQUENCE [LARGE SCALE GENOMIC DNA]</scope>
    <source>
        <strain>ATCC 700721 / MGH 78578</strain>
    </source>
</reference>
<dbReference type="EMBL" id="CP000647">
    <property type="protein sequence ID" value="ABR79085.1"/>
    <property type="molecule type" value="Genomic_DNA"/>
</dbReference>
<dbReference type="RefSeq" id="WP_002919259.1">
    <property type="nucleotide sequence ID" value="NC_009648.1"/>
</dbReference>
<dbReference type="SMR" id="A6TEV1"/>
<dbReference type="STRING" id="272620.KPN_03698"/>
<dbReference type="jPOST" id="A6TEV1"/>
<dbReference type="PaxDb" id="272620-KPN_03698"/>
<dbReference type="EnsemblBacteria" id="ABR79085">
    <property type="protein sequence ID" value="ABR79085"/>
    <property type="gene ID" value="KPN_03698"/>
</dbReference>
<dbReference type="GeneID" id="93270992"/>
<dbReference type="KEGG" id="kpn:KPN_03698"/>
<dbReference type="HOGENOM" id="CLU_103849_1_2_6"/>
<dbReference type="Proteomes" id="UP000000265">
    <property type="component" value="Chromosome"/>
</dbReference>
<dbReference type="GO" id="GO:0005829">
    <property type="term" value="C:cytosol"/>
    <property type="evidence" value="ECO:0007669"/>
    <property type="project" value="TreeGrafter"/>
</dbReference>
<dbReference type="GO" id="GO:0015935">
    <property type="term" value="C:small ribosomal subunit"/>
    <property type="evidence" value="ECO:0007669"/>
    <property type="project" value="TreeGrafter"/>
</dbReference>
<dbReference type="GO" id="GO:0019843">
    <property type="term" value="F:rRNA binding"/>
    <property type="evidence" value="ECO:0007669"/>
    <property type="project" value="UniProtKB-UniRule"/>
</dbReference>
<dbReference type="GO" id="GO:0003735">
    <property type="term" value="F:structural constituent of ribosome"/>
    <property type="evidence" value="ECO:0007669"/>
    <property type="project" value="InterPro"/>
</dbReference>
<dbReference type="GO" id="GO:0000049">
    <property type="term" value="F:tRNA binding"/>
    <property type="evidence" value="ECO:0007669"/>
    <property type="project" value="UniProtKB-UniRule"/>
</dbReference>
<dbReference type="GO" id="GO:0006412">
    <property type="term" value="P:translation"/>
    <property type="evidence" value="ECO:0007669"/>
    <property type="project" value="UniProtKB-UniRule"/>
</dbReference>
<dbReference type="FunFam" id="1.10.8.50:FF:000001">
    <property type="entry name" value="30S ribosomal protein S13"/>
    <property type="match status" value="1"/>
</dbReference>
<dbReference type="FunFam" id="4.10.910.10:FF:000001">
    <property type="entry name" value="30S ribosomal protein S13"/>
    <property type="match status" value="1"/>
</dbReference>
<dbReference type="Gene3D" id="1.10.8.50">
    <property type="match status" value="1"/>
</dbReference>
<dbReference type="Gene3D" id="4.10.910.10">
    <property type="entry name" value="30s ribosomal protein s13, domain 2"/>
    <property type="match status" value="1"/>
</dbReference>
<dbReference type="HAMAP" id="MF_01315">
    <property type="entry name" value="Ribosomal_uS13"/>
    <property type="match status" value="1"/>
</dbReference>
<dbReference type="InterPro" id="IPR027437">
    <property type="entry name" value="Rbsml_uS13_C"/>
</dbReference>
<dbReference type="InterPro" id="IPR001892">
    <property type="entry name" value="Ribosomal_uS13"/>
</dbReference>
<dbReference type="InterPro" id="IPR010979">
    <property type="entry name" value="Ribosomal_uS13-like_H2TH"/>
</dbReference>
<dbReference type="InterPro" id="IPR019980">
    <property type="entry name" value="Ribosomal_uS13_bac-type"/>
</dbReference>
<dbReference type="InterPro" id="IPR018269">
    <property type="entry name" value="Ribosomal_uS13_CS"/>
</dbReference>
<dbReference type="NCBIfam" id="TIGR03631">
    <property type="entry name" value="uS13_bact"/>
    <property type="match status" value="1"/>
</dbReference>
<dbReference type="PANTHER" id="PTHR10871">
    <property type="entry name" value="30S RIBOSOMAL PROTEIN S13/40S RIBOSOMAL PROTEIN S18"/>
    <property type="match status" value="1"/>
</dbReference>
<dbReference type="PANTHER" id="PTHR10871:SF1">
    <property type="entry name" value="SMALL RIBOSOMAL SUBUNIT PROTEIN US13M"/>
    <property type="match status" value="1"/>
</dbReference>
<dbReference type="Pfam" id="PF00416">
    <property type="entry name" value="Ribosomal_S13"/>
    <property type="match status" value="1"/>
</dbReference>
<dbReference type="PIRSF" id="PIRSF002134">
    <property type="entry name" value="Ribosomal_S13"/>
    <property type="match status" value="1"/>
</dbReference>
<dbReference type="SUPFAM" id="SSF46946">
    <property type="entry name" value="S13-like H2TH domain"/>
    <property type="match status" value="1"/>
</dbReference>
<dbReference type="PROSITE" id="PS00646">
    <property type="entry name" value="RIBOSOMAL_S13_1"/>
    <property type="match status" value="1"/>
</dbReference>
<dbReference type="PROSITE" id="PS50159">
    <property type="entry name" value="RIBOSOMAL_S13_2"/>
    <property type="match status" value="1"/>
</dbReference>
<protein>
    <recommendedName>
        <fullName evidence="1">Small ribosomal subunit protein uS13</fullName>
    </recommendedName>
    <alternativeName>
        <fullName evidence="3">30S ribosomal protein S13</fullName>
    </alternativeName>
</protein>
<comment type="function">
    <text evidence="1">Located at the top of the head of the 30S subunit, it contacts several helices of the 16S rRNA. In the 70S ribosome it contacts the 23S rRNA (bridge B1a) and protein L5 of the 50S subunit (bridge B1b), connecting the 2 subunits; these bridges are implicated in subunit movement. Contacts the tRNAs in the A and P-sites.</text>
</comment>
<comment type="subunit">
    <text evidence="1">Part of the 30S ribosomal subunit. Forms a loose heterodimer with protein S19. Forms two bridges to the 50S subunit in the 70S ribosome.</text>
</comment>
<comment type="similarity">
    <text evidence="1">Belongs to the universal ribosomal protein uS13 family.</text>
</comment>
<name>RS13_KLEP7</name>
<gene>
    <name evidence="1" type="primary">rpsM</name>
    <name type="ordered locus">KPN78578_36610</name>
    <name type="ORF">KPN_03698</name>
</gene>